<accession>A1JI23</accession>
<keyword id="KW-0028">Amino-acid biosynthesis</keyword>
<keyword id="KW-0055">Arginine biosynthesis</keyword>
<keyword id="KW-0067">ATP-binding</keyword>
<keyword id="KW-0963">Cytoplasm</keyword>
<keyword id="KW-0418">Kinase</keyword>
<keyword id="KW-0547">Nucleotide-binding</keyword>
<keyword id="KW-0808">Transferase</keyword>
<gene>
    <name evidence="1" type="primary">argB</name>
    <name type="ordered locus">YE0120</name>
</gene>
<feature type="chain" id="PRO_0000335673" description="Acetylglutamate kinase">
    <location>
        <begin position="1"/>
        <end position="254"/>
    </location>
</feature>
<feature type="binding site" evidence="1">
    <location>
        <begin position="40"/>
        <end position="41"/>
    </location>
    <ligand>
        <name>substrate</name>
    </ligand>
</feature>
<feature type="binding site" evidence="1">
    <location>
        <position position="62"/>
    </location>
    <ligand>
        <name>substrate</name>
    </ligand>
</feature>
<feature type="binding site" evidence="1">
    <location>
        <position position="154"/>
    </location>
    <ligand>
        <name>substrate</name>
    </ligand>
</feature>
<feature type="binding site" evidence="1">
    <location>
        <begin position="177"/>
        <end position="182"/>
    </location>
    <ligand>
        <name>ATP</name>
        <dbReference type="ChEBI" id="CHEBI:30616"/>
    </ligand>
</feature>
<feature type="binding site" evidence="1">
    <location>
        <begin position="205"/>
        <end position="207"/>
    </location>
    <ligand>
        <name>ATP</name>
        <dbReference type="ChEBI" id="CHEBI:30616"/>
    </ligand>
</feature>
<feature type="site" description="Transition state stabilizer" evidence="1">
    <location>
        <position position="4"/>
    </location>
</feature>
<feature type="site" description="Transition state stabilizer" evidence="1">
    <location>
        <position position="213"/>
    </location>
</feature>
<sequence>MVIKLGGVLLDSEEALERLFTALVTYREKHERPLVIMHGGGCLVDDLMKKLALPVVKKNGLRVTPADQIDIITGALAGTANKTLLAWAVKHDINAVGLCLGDGNTVSVTPLDAALGHVGKAEAGSPALVQTLLAANYMPIISSIGITKDGSLMNVNADQAATALAATLGADLILLSDVSGILDGKGQRIAEMTAQKAEQLIAQGIITDGMVVKVNAALDAARSLGRPVDIASWRHADQLPALFNGVPIGTRILA</sequence>
<dbReference type="EC" id="2.7.2.8" evidence="1"/>
<dbReference type="EMBL" id="AM286415">
    <property type="protein sequence ID" value="CAL10261.1"/>
    <property type="molecule type" value="Genomic_DNA"/>
</dbReference>
<dbReference type="RefSeq" id="YP_001004513.1">
    <property type="nucleotide sequence ID" value="NC_008800.1"/>
</dbReference>
<dbReference type="SMR" id="A1JI23"/>
<dbReference type="KEGG" id="yen:YE0120"/>
<dbReference type="PATRIC" id="fig|393305.7.peg.211"/>
<dbReference type="eggNOG" id="COG0548">
    <property type="taxonomic scope" value="Bacteria"/>
</dbReference>
<dbReference type="HOGENOM" id="CLU_053680_1_1_6"/>
<dbReference type="OrthoDB" id="5915023at2"/>
<dbReference type="UniPathway" id="UPA00068">
    <property type="reaction ID" value="UER00107"/>
</dbReference>
<dbReference type="Proteomes" id="UP000000642">
    <property type="component" value="Chromosome"/>
</dbReference>
<dbReference type="GO" id="GO:0005737">
    <property type="term" value="C:cytoplasm"/>
    <property type="evidence" value="ECO:0007669"/>
    <property type="project" value="UniProtKB-SubCell"/>
</dbReference>
<dbReference type="GO" id="GO:0003991">
    <property type="term" value="F:acetylglutamate kinase activity"/>
    <property type="evidence" value="ECO:0007669"/>
    <property type="project" value="UniProtKB-UniRule"/>
</dbReference>
<dbReference type="GO" id="GO:0005524">
    <property type="term" value="F:ATP binding"/>
    <property type="evidence" value="ECO:0007669"/>
    <property type="project" value="UniProtKB-UniRule"/>
</dbReference>
<dbReference type="GO" id="GO:0042450">
    <property type="term" value="P:arginine biosynthetic process via ornithine"/>
    <property type="evidence" value="ECO:0007669"/>
    <property type="project" value="UniProtKB-UniRule"/>
</dbReference>
<dbReference type="GO" id="GO:0006526">
    <property type="term" value="P:L-arginine biosynthetic process"/>
    <property type="evidence" value="ECO:0007669"/>
    <property type="project" value="UniProtKB-UniPathway"/>
</dbReference>
<dbReference type="CDD" id="cd04249">
    <property type="entry name" value="AAK_NAGK-NC"/>
    <property type="match status" value="1"/>
</dbReference>
<dbReference type="FunFam" id="3.40.1160.10:FF:000008">
    <property type="entry name" value="Acetylglutamate kinase"/>
    <property type="match status" value="1"/>
</dbReference>
<dbReference type="Gene3D" id="3.40.1160.10">
    <property type="entry name" value="Acetylglutamate kinase-like"/>
    <property type="match status" value="1"/>
</dbReference>
<dbReference type="HAMAP" id="MF_00082">
    <property type="entry name" value="ArgB"/>
    <property type="match status" value="1"/>
</dbReference>
<dbReference type="InterPro" id="IPR036393">
    <property type="entry name" value="AceGlu_kinase-like_sf"/>
</dbReference>
<dbReference type="InterPro" id="IPR004662">
    <property type="entry name" value="AcgluKinase_fam"/>
</dbReference>
<dbReference type="InterPro" id="IPR037528">
    <property type="entry name" value="ArgB"/>
</dbReference>
<dbReference type="InterPro" id="IPR001048">
    <property type="entry name" value="Asp/Glu/Uridylate_kinase"/>
</dbReference>
<dbReference type="InterPro" id="IPR041731">
    <property type="entry name" value="NAGK-NC"/>
</dbReference>
<dbReference type="NCBIfam" id="TIGR00761">
    <property type="entry name" value="argB"/>
    <property type="match status" value="1"/>
</dbReference>
<dbReference type="PANTHER" id="PTHR23342">
    <property type="entry name" value="N-ACETYLGLUTAMATE SYNTHASE"/>
    <property type="match status" value="1"/>
</dbReference>
<dbReference type="PANTHER" id="PTHR23342:SF0">
    <property type="entry name" value="N-ACETYLGLUTAMATE SYNTHASE, MITOCHONDRIAL"/>
    <property type="match status" value="1"/>
</dbReference>
<dbReference type="Pfam" id="PF00696">
    <property type="entry name" value="AA_kinase"/>
    <property type="match status" value="1"/>
</dbReference>
<dbReference type="PIRSF" id="PIRSF000728">
    <property type="entry name" value="NAGK"/>
    <property type="match status" value="1"/>
</dbReference>
<dbReference type="SUPFAM" id="SSF53633">
    <property type="entry name" value="Carbamate kinase-like"/>
    <property type="match status" value="1"/>
</dbReference>
<evidence type="ECO:0000255" key="1">
    <source>
        <dbReference type="HAMAP-Rule" id="MF_00082"/>
    </source>
</evidence>
<protein>
    <recommendedName>
        <fullName evidence="1">Acetylglutamate kinase</fullName>
        <ecNumber evidence="1">2.7.2.8</ecNumber>
    </recommendedName>
    <alternativeName>
        <fullName evidence="1">N-acetyl-L-glutamate 5-phosphotransferase</fullName>
    </alternativeName>
    <alternativeName>
        <fullName evidence="1">NAG kinase</fullName>
        <shortName evidence="1">NAGK</shortName>
    </alternativeName>
</protein>
<organism>
    <name type="scientific">Yersinia enterocolitica serotype O:8 / biotype 1B (strain NCTC 13174 / 8081)</name>
    <dbReference type="NCBI Taxonomy" id="393305"/>
    <lineage>
        <taxon>Bacteria</taxon>
        <taxon>Pseudomonadati</taxon>
        <taxon>Pseudomonadota</taxon>
        <taxon>Gammaproteobacteria</taxon>
        <taxon>Enterobacterales</taxon>
        <taxon>Yersiniaceae</taxon>
        <taxon>Yersinia</taxon>
    </lineage>
</organism>
<comment type="function">
    <text evidence="1">Catalyzes the ATP-dependent phosphorylation of N-acetyl-L-glutamate.</text>
</comment>
<comment type="catalytic activity">
    <reaction evidence="1">
        <text>N-acetyl-L-glutamate + ATP = N-acetyl-L-glutamyl 5-phosphate + ADP</text>
        <dbReference type="Rhea" id="RHEA:14629"/>
        <dbReference type="ChEBI" id="CHEBI:30616"/>
        <dbReference type="ChEBI" id="CHEBI:44337"/>
        <dbReference type="ChEBI" id="CHEBI:57936"/>
        <dbReference type="ChEBI" id="CHEBI:456216"/>
        <dbReference type="EC" id="2.7.2.8"/>
    </reaction>
</comment>
<comment type="pathway">
    <text evidence="1">Amino-acid biosynthesis; L-arginine biosynthesis; N(2)-acetyl-L-ornithine from L-glutamate: step 2/4.</text>
</comment>
<comment type="subunit">
    <text evidence="1">Homodimer.</text>
</comment>
<comment type="subcellular location">
    <subcellularLocation>
        <location evidence="1">Cytoplasm</location>
    </subcellularLocation>
</comment>
<comment type="similarity">
    <text evidence="1">Belongs to the acetylglutamate kinase family. ArgB subfamily.</text>
</comment>
<reference key="1">
    <citation type="journal article" date="2006" name="PLoS Genet.">
        <title>The complete genome sequence and comparative genome analysis of the high pathogenicity Yersinia enterocolitica strain 8081.</title>
        <authorList>
            <person name="Thomson N.R."/>
            <person name="Howard S."/>
            <person name="Wren B.W."/>
            <person name="Holden M.T.G."/>
            <person name="Crossman L."/>
            <person name="Challis G.L."/>
            <person name="Churcher C."/>
            <person name="Mungall K."/>
            <person name="Brooks K."/>
            <person name="Chillingworth T."/>
            <person name="Feltwell T."/>
            <person name="Abdellah Z."/>
            <person name="Hauser H."/>
            <person name="Jagels K."/>
            <person name="Maddison M."/>
            <person name="Moule S."/>
            <person name="Sanders M."/>
            <person name="Whitehead S."/>
            <person name="Quail M.A."/>
            <person name="Dougan G."/>
            <person name="Parkhill J."/>
            <person name="Prentice M.B."/>
        </authorList>
    </citation>
    <scope>NUCLEOTIDE SEQUENCE [LARGE SCALE GENOMIC DNA]</scope>
    <source>
        <strain>NCTC 13174 / 8081</strain>
    </source>
</reference>
<name>ARGB_YERE8</name>
<proteinExistence type="inferred from homology"/>